<comment type="catalytic activity">
    <reaction>
        <text>ATP + H2O = ADP + phosphate + H(+)</text>
        <dbReference type="Rhea" id="RHEA:13065"/>
        <dbReference type="ChEBI" id="CHEBI:15377"/>
        <dbReference type="ChEBI" id="CHEBI:15378"/>
        <dbReference type="ChEBI" id="CHEBI:30616"/>
        <dbReference type="ChEBI" id="CHEBI:43474"/>
        <dbReference type="ChEBI" id="CHEBI:456216"/>
        <dbReference type="EC" id="3.6.4.13"/>
    </reaction>
</comment>
<comment type="similarity">
    <text evidence="4">Belongs to the DEAD box helicase family. DEAH subfamily.</text>
</comment>
<feature type="chain" id="PRO_0000055170" description="Probable ATP-dependent RNA helicase DHX35 homolog">
    <location>
        <begin position="1"/>
        <end position="732"/>
    </location>
</feature>
<feature type="domain" description="Helicase ATP-binding" evidence="1">
    <location>
        <begin position="87"/>
        <end position="251"/>
    </location>
</feature>
<feature type="domain" description="Helicase C-terminal" evidence="2">
    <location>
        <begin position="283"/>
        <end position="457"/>
    </location>
</feature>
<feature type="region of interest" description="Disordered" evidence="3">
    <location>
        <begin position="1"/>
        <end position="50"/>
    </location>
</feature>
<feature type="short sequence motif" description="DEAH box">
    <location>
        <begin position="198"/>
        <end position="201"/>
    </location>
</feature>
<feature type="binding site" evidence="1">
    <location>
        <begin position="100"/>
        <end position="107"/>
    </location>
    <ligand>
        <name>ATP</name>
        <dbReference type="ChEBI" id="CHEBI:30616"/>
    </ligand>
</feature>
<organism>
    <name type="scientific">Caenorhabditis elegans</name>
    <dbReference type="NCBI Taxonomy" id="6239"/>
    <lineage>
        <taxon>Eukaryota</taxon>
        <taxon>Metazoa</taxon>
        <taxon>Ecdysozoa</taxon>
        <taxon>Nematoda</taxon>
        <taxon>Chromadorea</taxon>
        <taxon>Rhabditida</taxon>
        <taxon>Rhabditina</taxon>
        <taxon>Rhabditomorpha</taxon>
        <taxon>Rhabditoidea</taxon>
        <taxon>Rhabditidae</taxon>
        <taxon>Peloderinae</taxon>
        <taxon>Caenorhabditis</taxon>
    </lineage>
</organism>
<gene>
    <name evidence="5" type="primary">ddx-35</name>
    <name evidence="5" type="ORF">Y67D2.6</name>
</gene>
<sequence length="732" mass="82544">MSYHPGHGHRQEPRKGAGARRGFARPDDSADAPRTGPLIFEERSTENAGAAPPIEEQLKVHNNPYASLNIQQQRIRLPIFKNRGHILYMCERYRTIIIVGETGCGKSTQVPQFLLEAGWAADGRQIVITQPRRVAVVTLATRVAEEKDCILGHDVGYTVRFDDVSDKDTKVKFMTDGLLLREILADPLLSKYSIIMIDEAHERSCNTDILLGLLRKIIQIRNDLRIIVSSATLDAELFKDFFEMNETGNSDKDTAGIISVEGRTHPVAVHHTKTSVPDYCQSAVDTVINIHKHENPGDILVFLTGQDEVEDVCEKLRELAGNLKNCDRLWVVPCYGALPAREQMKAFDSTPHGTRKVVVATNIAEASITIPGICYVIDTGYVKLRAQHAANGVETLMRVTVSKASAEQRAGRAGRIRPGKCYRLYPESEFERFAEGTVPEIQRCQMASTILQLKALGVQNVHRFHYLSPPPSWAMINGLELLYALGAIDETSQLTSPLGLQMAEFPLPPMHSKCLLKSAEFGCSTEMVTIVAMMQIQDVFITPYRQRHQADVIRKKFAVEEGDHMTMLNVFTKFVENGRSKKWCSDHFVNYRGLMRADNVRSQLVRLLKRFEIEKVSSRGLINCSENIRQCLVTGFFSQAAQYHYTGKYMTVKESFPFNMYKGSSIMFKKDYPKWVIFTEVMQDSIRDVTVIEPEWLYELAPHYYEFGTEGELAEKRMRGPAATSAAADDDY</sequence>
<protein>
    <recommendedName>
        <fullName>Probable ATP-dependent RNA helicase DHX35 homolog</fullName>
        <ecNumber>3.6.4.13</ecNumber>
    </recommendedName>
</protein>
<proteinExistence type="inferred from homology"/>
<dbReference type="EC" id="3.6.4.13"/>
<dbReference type="EMBL" id="FO081642">
    <property type="protein sequence ID" value="CCD73030.1"/>
    <property type="molecule type" value="Genomic_DNA"/>
</dbReference>
<dbReference type="RefSeq" id="NP_497420.1">
    <property type="nucleotide sequence ID" value="NM_065019.5"/>
</dbReference>
<dbReference type="SMR" id="Q9BKQ8"/>
<dbReference type="BioGRID" id="40564">
    <property type="interactions" value="2"/>
</dbReference>
<dbReference type="FunCoup" id="Q9BKQ8">
    <property type="interactions" value="1876"/>
</dbReference>
<dbReference type="STRING" id="6239.Y67D2.6.1"/>
<dbReference type="PaxDb" id="6239-Y67D2.6"/>
<dbReference type="PeptideAtlas" id="Q9BKQ8"/>
<dbReference type="EnsemblMetazoa" id="Y67D2.6.1">
    <property type="protein sequence ID" value="Y67D2.6.1"/>
    <property type="gene ID" value="WBGene00022056"/>
</dbReference>
<dbReference type="GeneID" id="175308"/>
<dbReference type="KEGG" id="cel:CELE_Y67D2.6"/>
<dbReference type="UCSC" id="Y67D2.6">
    <property type="organism name" value="c. elegans"/>
</dbReference>
<dbReference type="AGR" id="WB:WBGene00022056"/>
<dbReference type="CTD" id="175308"/>
<dbReference type="WormBase" id="Y67D2.6">
    <property type="protein sequence ID" value="CE27311"/>
    <property type="gene ID" value="WBGene00022056"/>
    <property type="gene designation" value="ddx-35"/>
</dbReference>
<dbReference type="eggNOG" id="KOG0922">
    <property type="taxonomic scope" value="Eukaryota"/>
</dbReference>
<dbReference type="GeneTree" id="ENSGT00940000156142"/>
<dbReference type="HOGENOM" id="CLU_001832_5_11_1"/>
<dbReference type="InParanoid" id="Q9BKQ8"/>
<dbReference type="OMA" id="FHEVMET"/>
<dbReference type="OrthoDB" id="10253254at2759"/>
<dbReference type="PhylomeDB" id="Q9BKQ8"/>
<dbReference type="Reactome" id="R-CEL-72163">
    <property type="pathway name" value="mRNA Splicing - Major Pathway"/>
</dbReference>
<dbReference type="PRO" id="PR:Q9BKQ8"/>
<dbReference type="Proteomes" id="UP000001940">
    <property type="component" value="Chromosome III"/>
</dbReference>
<dbReference type="Bgee" id="WBGene00022056">
    <property type="expression patterns" value="Expressed in adult organism and 3 other cell types or tissues"/>
</dbReference>
<dbReference type="GO" id="GO:0071013">
    <property type="term" value="C:catalytic step 2 spliceosome"/>
    <property type="evidence" value="ECO:0000318"/>
    <property type="project" value="GO_Central"/>
</dbReference>
<dbReference type="GO" id="GO:0005524">
    <property type="term" value="F:ATP binding"/>
    <property type="evidence" value="ECO:0007669"/>
    <property type="project" value="UniProtKB-KW"/>
</dbReference>
<dbReference type="GO" id="GO:0016887">
    <property type="term" value="F:ATP hydrolysis activity"/>
    <property type="evidence" value="ECO:0007669"/>
    <property type="project" value="RHEA"/>
</dbReference>
<dbReference type="GO" id="GO:0004386">
    <property type="term" value="F:helicase activity"/>
    <property type="evidence" value="ECO:0000318"/>
    <property type="project" value="GO_Central"/>
</dbReference>
<dbReference type="GO" id="GO:0003723">
    <property type="term" value="F:RNA binding"/>
    <property type="evidence" value="ECO:0000318"/>
    <property type="project" value="GO_Central"/>
</dbReference>
<dbReference type="GO" id="GO:0003724">
    <property type="term" value="F:RNA helicase activity"/>
    <property type="evidence" value="ECO:0007669"/>
    <property type="project" value="UniProtKB-EC"/>
</dbReference>
<dbReference type="CDD" id="cd17980">
    <property type="entry name" value="DEXHc_DHX35"/>
    <property type="match status" value="1"/>
</dbReference>
<dbReference type="CDD" id="cd18791">
    <property type="entry name" value="SF2_C_RHA"/>
    <property type="match status" value="1"/>
</dbReference>
<dbReference type="FunFam" id="3.40.50.300:FF:000767">
    <property type="entry name" value="Putative ATP-dependent RNA helicase DHX35"/>
    <property type="match status" value="1"/>
</dbReference>
<dbReference type="FunFam" id="3.40.50.300:FF:001326">
    <property type="entry name" value="Putative ATP-dependent RNA helicase DHX35"/>
    <property type="match status" value="1"/>
</dbReference>
<dbReference type="Gene3D" id="1.20.120.1080">
    <property type="match status" value="1"/>
</dbReference>
<dbReference type="Gene3D" id="3.40.50.300">
    <property type="entry name" value="P-loop containing nucleotide triphosphate hydrolases"/>
    <property type="match status" value="2"/>
</dbReference>
<dbReference type="InterPro" id="IPR011709">
    <property type="entry name" value="DEAD-box_helicase_OB_fold"/>
</dbReference>
<dbReference type="InterPro" id="IPR011545">
    <property type="entry name" value="DEAD/DEAH_box_helicase_dom"/>
</dbReference>
<dbReference type="InterPro" id="IPR002464">
    <property type="entry name" value="DNA/RNA_helicase_DEAH_CS"/>
</dbReference>
<dbReference type="InterPro" id="IPR048333">
    <property type="entry name" value="HA2_WH"/>
</dbReference>
<dbReference type="InterPro" id="IPR007502">
    <property type="entry name" value="Helicase-assoc_dom"/>
</dbReference>
<dbReference type="InterPro" id="IPR014001">
    <property type="entry name" value="Helicase_ATP-bd"/>
</dbReference>
<dbReference type="InterPro" id="IPR001650">
    <property type="entry name" value="Helicase_C-like"/>
</dbReference>
<dbReference type="InterPro" id="IPR027417">
    <property type="entry name" value="P-loop_NTPase"/>
</dbReference>
<dbReference type="PANTHER" id="PTHR18934">
    <property type="entry name" value="ATP-DEPENDENT RNA HELICASE"/>
    <property type="match status" value="1"/>
</dbReference>
<dbReference type="PANTHER" id="PTHR18934:SF136">
    <property type="entry name" value="ATP-DEPENDENT RNA HELICASE DHX35-RELATED"/>
    <property type="match status" value="1"/>
</dbReference>
<dbReference type="Pfam" id="PF00270">
    <property type="entry name" value="DEAD"/>
    <property type="match status" value="1"/>
</dbReference>
<dbReference type="Pfam" id="PF21010">
    <property type="entry name" value="HA2_C"/>
    <property type="match status" value="1"/>
</dbReference>
<dbReference type="Pfam" id="PF04408">
    <property type="entry name" value="HA2_N"/>
    <property type="match status" value="1"/>
</dbReference>
<dbReference type="Pfam" id="PF00271">
    <property type="entry name" value="Helicase_C"/>
    <property type="match status" value="1"/>
</dbReference>
<dbReference type="Pfam" id="PF07717">
    <property type="entry name" value="OB_NTP_bind"/>
    <property type="match status" value="1"/>
</dbReference>
<dbReference type="SMART" id="SM00487">
    <property type="entry name" value="DEXDc"/>
    <property type="match status" value="1"/>
</dbReference>
<dbReference type="SMART" id="SM00847">
    <property type="entry name" value="HA2"/>
    <property type="match status" value="1"/>
</dbReference>
<dbReference type="SMART" id="SM00490">
    <property type="entry name" value="HELICc"/>
    <property type="match status" value="1"/>
</dbReference>
<dbReference type="SUPFAM" id="SSF52540">
    <property type="entry name" value="P-loop containing nucleoside triphosphate hydrolases"/>
    <property type="match status" value="1"/>
</dbReference>
<dbReference type="PROSITE" id="PS00690">
    <property type="entry name" value="DEAH_ATP_HELICASE"/>
    <property type="match status" value="1"/>
</dbReference>
<dbReference type="PROSITE" id="PS51192">
    <property type="entry name" value="HELICASE_ATP_BIND_1"/>
    <property type="match status" value="1"/>
</dbReference>
<dbReference type="PROSITE" id="PS51194">
    <property type="entry name" value="HELICASE_CTER"/>
    <property type="match status" value="1"/>
</dbReference>
<accession>Q9BKQ8</accession>
<keyword id="KW-0067">ATP-binding</keyword>
<keyword id="KW-0347">Helicase</keyword>
<keyword id="KW-0378">Hydrolase</keyword>
<keyword id="KW-0547">Nucleotide-binding</keyword>
<keyword id="KW-1185">Reference proteome</keyword>
<name>DHX35_CAEEL</name>
<reference key="1">
    <citation type="journal article" date="1998" name="Science">
        <title>Genome sequence of the nematode C. elegans: a platform for investigating biology.</title>
        <authorList>
            <consortium name="The C. elegans sequencing consortium"/>
        </authorList>
    </citation>
    <scope>NUCLEOTIDE SEQUENCE [LARGE SCALE GENOMIC DNA]</scope>
    <source>
        <strain>Bristol N2</strain>
    </source>
</reference>
<evidence type="ECO:0000255" key="1">
    <source>
        <dbReference type="PROSITE-ProRule" id="PRU00541"/>
    </source>
</evidence>
<evidence type="ECO:0000255" key="2">
    <source>
        <dbReference type="PROSITE-ProRule" id="PRU00542"/>
    </source>
</evidence>
<evidence type="ECO:0000256" key="3">
    <source>
        <dbReference type="SAM" id="MobiDB-lite"/>
    </source>
</evidence>
<evidence type="ECO:0000305" key="4"/>
<evidence type="ECO:0000312" key="5">
    <source>
        <dbReference type="WormBase" id="Y67D2.6"/>
    </source>
</evidence>